<proteinExistence type="inferred from homology"/>
<protein>
    <recommendedName>
        <fullName evidence="1">Argininosuccinate lyase</fullName>
        <shortName evidence="1">ASAL</shortName>
        <ecNumber evidence="1">4.3.2.1</ecNumber>
    </recommendedName>
    <alternativeName>
        <fullName evidence="1">Arginosuccinase</fullName>
    </alternativeName>
</protein>
<name>ARLY_DEHM1</name>
<comment type="catalytic activity">
    <reaction evidence="1">
        <text>2-(N(omega)-L-arginino)succinate = fumarate + L-arginine</text>
        <dbReference type="Rhea" id="RHEA:24020"/>
        <dbReference type="ChEBI" id="CHEBI:29806"/>
        <dbReference type="ChEBI" id="CHEBI:32682"/>
        <dbReference type="ChEBI" id="CHEBI:57472"/>
        <dbReference type="EC" id="4.3.2.1"/>
    </reaction>
</comment>
<comment type="pathway">
    <text evidence="1">Amino-acid biosynthesis; L-arginine biosynthesis; L-arginine from L-ornithine and carbamoyl phosphate: step 3/3.</text>
</comment>
<comment type="subcellular location">
    <subcellularLocation>
        <location evidence="1">Cytoplasm</location>
    </subcellularLocation>
</comment>
<comment type="similarity">
    <text evidence="1">Belongs to the lyase 1 family. Argininosuccinate lyase subfamily.</text>
</comment>
<feature type="chain" id="PRO_0000240724" description="Argininosuccinate lyase">
    <location>
        <begin position="1"/>
        <end position="461"/>
    </location>
</feature>
<organism>
    <name type="scientific">Dehalococcoides mccartyi (strain ATCC BAA-2266 / KCTC 15142 / 195)</name>
    <name type="common">Dehalococcoides ethenogenes (strain 195)</name>
    <dbReference type="NCBI Taxonomy" id="243164"/>
    <lineage>
        <taxon>Bacteria</taxon>
        <taxon>Bacillati</taxon>
        <taxon>Chloroflexota</taxon>
        <taxon>Dehalococcoidia</taxon>
        <taxon>Dehalococcoidales</taxon>
        <taxon>Dehalococcoidaceae</taxon>
        <taxon>Dehalococcoides</taxon>
    </lineage>
</organism>
<reference key="1">
    <citation type="journal article" date="2005" name="Science">
        <title>Genome sequence of the PCE-dechlorinating bacterium Dehalococcoides ethenogenes.</title>
        <authorList>
            <person name="Seshadri R."/>
            <person name="Adrian L."/>
            <person name="Fouts D.E."/>
            <person name="Eisen J.A."/>
            <person name="Phillippy A.M."/>
            <person name="Methe B.A."/>
            <person name="Ward N.L."/>
            <person name="Nelson W.C."/>
            <person name="DeBoy R.T."/>
            <person name="Khouri H.M."/>
            <person name="Kolonay J.F."/>
            <person name="Dodson R.J."/>
            <person name="Daugherty S.C."/>
            <person name="Brinkac L.M."/>
            <person name="Sullivan S.A."/>
            <person name="Madupu R."/>
            <person name="Nelson K.E."/>
            <person name="Kang K.H."/>
            <person name="Impraim M."/>
            <person name="Tran K."/>
            <person name="Robinson J.M."/>
            <person name="Forberger H.A."/>
            <person name="Fraser C.M."/>
            <person name="Zinder S.H."/>
            <person name="Heidelberg J.F."/>
        </authorList>
    </citation>
    <scope>NUCLEOTIDE SEQUENCE [LARGE SCALE GENOMIC DNA]</scope>
    <source>
        <strain>ATCC BAA-2266 / KCTC 15142 / 195</strain>
    </source>
</reference>
<sequence>MSHIRSRFSKPADELVVRYTTSLPFDWRLYQEDIKCSTAHARMLGKQSIISAGDSQSIINGLSDILTEIETGSFVFKPEMEDIHMAIEGRLFELIGEAAGRLHTARSRNDQVATDVHLFVKNTCTSTINKIRTLQGALLKQAEAHQQTALPGYTHLQVAQPVLLSHHLLAYFEMLERDCGRFTDAKKRSDVMPLGSGALAGVPYPLDRKMVAEELGFTAISQNSLDAVSERDFVLEYLSDAAICQMHLSRLSEEMVIWSSAEYAFVELDDAYTTGSSIMPQKKNPDVAELCRGKTGRVYGSLNTMLTVMKGLPLSYNRDLQEDKEPLFECADTLGDSLEVFAGMIKTATFKPERMLRALEKGYVLATDIADYLVGKGESFRSSHGIVARLVSYAISQNKTFGELSLEEYRQFSNLFGNDIYAVDIKSALNARNLTGGTAPKQIAQAIARAKKILAEAGVKN</sequence>
<accession>Q3Z726</accession>
<keyword id="KW-0028">Amino-acid biosynthesis</keyword>
<keyword id="KW-0055">Arginine biosynthesis</keyword>
<keyword id="KW-0963">Cytoplasm</keyword>
<keyword id="KW-0456">Lyase</keyword>
<gene>
    <name evidence="1" type="primary">argH</name>
    <name type="ordered locus">DET1261</name>
</gene>
<dbReference type="EC" id="4.3.2.1" evidence="1"/>
<dbReference type="EMBL" id="CP000027">
    <property type="protein sequence ID" value="AAW39469.1"/>
    <property type="molecule type" value="Genomic_DNA"/>
</dbReference>
<dbReference type="RefSeq" id="WP_010936950.1">
    <property type="nucleotide sequence ID" value="NC_002936.3"/>
</dbReference>
<dbReference type="SMR" id="Q3Z726"/>
<dbReference type="FunCoup" id="Q3Z726">
    <property type="interactions" value="296"/>
</dbReference>
<dbReference type="STRING" id="243164.DET1261"/>
<dbReference type="GeneID" id="3229429"/>
<dbReference type="KEGG" id="det:DET1261"/>
<dbReference type="PATRIC" id="fig|243164.10.peg.1190"/>
<dbReference type="eggNOG" id="COG0165">
    <property type="taxonomic scope" value="Bacteria"/>
</dbReference>
<dbReference type="HOGENOM" id="CLU_027272_2_3_0"/>
<dbReference type="InParanoid" id="Q3Z726"/>
<dbReference type="UniPathway" id="UPA00068">
    <property type="reaction ID" value="UER00114"/>
</dbReference>
<dbReference type="Proteomes" id="UP000008289">
    <property type="component" value="Chromosome"/>
</dbReference>
<dbReference type="GO" id="GO:0005829">
    <property type="term" value="C:cytosol"/>
    <property type="evidence" value="ECO:0007669"/>
    <property type="project" value="TreeGrafter"/>
</dbReference>
<dbReference type="GO" id="GO:0004056">
    <property type="term" value="F:argininosuccinate lyase activity"/>
    <property type="evidence" value="ECO:0007669"/>
    <property type="project" value="UniProtKB-UniRule"/>
</dbReference>
<dbReference type="GO" id="GO:0042450">
    <property type="term" value="P:arginine biosynthetic process via ornithine"/>
    <property type="evidence" value="ECO:0007669"/>
    <property type="project" value="InterPro"/>
</dbReference>
<dbReference type="GO" id="GO:0006526">
    <property type="term" value="P:L-arginine biosynthetic process"/>
    <property type="evidence" value="ECO:0007669"/>
    <property type="project" value="UniProtKB-UniRule"/>
</dbReference>
<dbReference type="CDD" id="cd01359">
    <property type="entry name" value="Argininosuccinate_lyase"/>
    <property type="match status" value="1"/>
</dbReference>
<dbReference type="FunFam" id="1.10.275.10:FF:000002">
    <property type="entry name" value="Argininosuccinate lyase"/>
    <property type="match status" value="1"/>
</dbReference>
<dbReference type="FunFam" id="1.10.40.30:FF:000001">
    <property type="entry name" value="Argininosuccinate lyase"/>
    <property type="match status" value="1"/>
</dbReference>
<dbReference type="FunFam" id="1.20.200.10:FF:000015">
    <property type="entry name" value="argininosuccinate lyase isoform X2"/>
    <property type="match status" value="1"/>
</dbReference>
<dbReference type="Gene3D" id="1.10.40.30">
    <property type="entry name" value="Fumarase/aspartase (C-terminal domain)"/>
    <property type="match status" value="1"/>
</dbReference>
<dbReference type="Gene3D" id="1.20.200.10">
    <property type="entry name" value="Fumarase/aspartase (Central domain)"/>
    <property type="match status" value="1"/>
</dbReference>
<dbReference type="Gene3D" id="1.10.275.10">
    <property type="entry name" value="Fumarase/aspartase (N-terminal domain)"/>
    <property type="match status" value="1"/>
</dbReference>
<dbReference type="HAMAP" id="MF_00006">
    <property type="entry name" value="Arg_succ_lyase"/>
    <property type="match status" value="1"/>
</dbReference>
<dbReference type="InterPro" id="IPR029419">
    <property type="entry name" value="Arg_succ_lyase_C"/>
</dbReference>
<dbReference type="InterPro" id="IPR009049">
    <property type="entry name" value="Argininosuccinate_lyase"/>
</dbReference>
<dbReference type="InterPro" id="IPR024083">
    <property type="entry name" value="Fumarase/histidase_N"/>
</dbReference>
<dbReference type="InterPro" id="IPR020557">
    <property type="entry name" value="Fumarate_lyase_CS"/>
</dbReference>
<dbReference type="InterPro" id="IPR000362">
    <property type="entry name" value="Fumarate_lyase_fam"/>
</dbReference>
<dbReference type="InterPro" id="IPR022761">
    <property type="entry name" value="Fumarate_lyase_N"/>
</dbReference>
<dbReference type="InterPro" id="IPR008948">
    <property type="entry name" value="L-Aspartase-like"/>
</dbReference>
<dbReference type="NCBIfam" id="TIGR00838">
    <property type="entry name" value="argH"/>
    <property type="match status" value="1"/>
</dbReference>
<dbReference type="PANTHER" id="PTHR43814">
    <property type="entry name" value="ARGININOSUCCINATE LYASE"/>
    <property type="match status" value="1"/>
</dbReference>
<dbReference type="PANTHER" id="PTHR43814:SF1">
    <property type="entry name" value="ARGININOSUCCINATE LYASE"/>
    <property type="match status" value="1"/>
</dbReference>
<dbReference type="Pfam" id="PF14698">
    <property type="entry name" value="ASL_C2"/>
    <property type="match status" value="1"/>
</dbReference>
<dbReference type="Pfam" id="PF00206">
    <property type="entry name" value="Lyase_1"/>
    <property type="match status" value="1"/>
</dbReference>
<dbReference type="PRINTS" id="PR00145">
    <property type="entry name" value="ARGSUCLYASE"/>
</dbReference>
<dbReference type="PRINTS" id="PR00149">
    <property type="entry name" value="FUMRATELYASE"/>
</dbReference>
<dbReference type="SUPFAM" id="SSF48557">
    <property type="entry name" value="L-aspartase-like"/>
    <property type="match status" value="1"/>
</dbReference>
<dbReference type="PROSITE" id="PS00163">
    <property type="entry name" value="FUMARATE_LYASES"/>
    <property type="match status" value="1"/>
</dbReference>
<evidence type="ECO:0000255" key="1">
    <source>
        <dbReference type="HAMAP-Rule" id="MF_00006"/>
    </source>
</evidence>